<proteinExistence type="evidence at protein level"/>
<dbReference type="EC" id="3.6.4.13" evidence="1"/>
<dbReference type="EMBL" id="BC091359">
    <property type="protein sequence ID" value="AAH91359.1"/>
    <property type="molecule type" value="mRNA"/>
</dbReference>
<dbReference type="RefSeq" id="NP_001013267.1">
    <property type="nucleotide sequence ID" value="NM_001013249.1"/>
</dbReference>
<dbReference type="RefSeq" id="XP_017451287.1">
    <property type="nucleotide sequence ID" value="XM_017595798.1"/>
</dbReference>
<dbReference type="RefSeq" id="XP_017451288.1">
    <property type="nucleotide sequence ID" value="XM_017595799.3"/>
</dbReference>
<dbReference type="RefSeq" id="XP_017451289.1">
    <property type="nucleotide sequence ID" value="XM_017595800.3"/>
</dbReference>
<dbReference type="SMR" id="Q5BJS0"/>
<dbReference type="BioGRID" id="266361">
    <property type="interactions" value="1"/>
</dbReference>
<dbReference type="FunCoup" id="Q5BJS0">
    <property type="interactions" value="3000"/>
</dbReference>
<dbReference type="STRING" id="10116.ENSRNOP00000043896"/>
<dbReference type="iPTMnet" id="Q5BJS0"/>
<dbReference type="PhosphoSitePlus" id="Q5BJS0"/>
<dbReference type="jPOST" id="Q5BJS0"/>
<dbReference type="PaxDb" id="10116-ENSRNOP00000043896"/>
<dbReference type="GeneID" id="367172"/>
<dbReference type="KEGG" id="rno:367172"/>
<dbReference type="UCSC" id="RGD:1308888">
    <property type="organism name" value="rat"/>
</dbReference>
<dbReference type="AGR" id="RGD:1308888"/>
<dbReference type="CTD" id="22907"/>
<dbReference type="RGD" id="1308888">
    <property type="gene designation" value="Dhx30"/>
</dbReference>
<dbReference type="VEuPathDB" id="HostDB:ENSRNOG00000029194"/>
<dbReference type="eggNOG" id="KOG0920">
    <property type="taxonomic scope" value="Eukaryota"/>
</dbReference>
<dbReference type="InParanoid" id="Q5BJS0"/>
<dbReference type="OrthoDB" id="3363059at2759"/>
<dbReference type="PRO" id="PR:Q5BJS0"/>
<dbReference type="Proteomes" id="UP000002494">
    <property type="component" value="Chromosome 8"/>
</dbReference>
<dbReference type="Bgee" id="ENSRNOG00000029194">
    <property type="expression patterns" value="Expressed in thymus and 19 other cell types or tissues"/>
</dbReference>
<dbReference type="ExpressionAtlas" id="Q5BJS0">
    <property type="expression patterns" value="baseline and differential"/>
</dbReference>
<dbReference type="GO" id="GO:0005737">
    <property type="term" value="C:cytoplasm"/>
    <property type="evidence" value="ECO:0000250"/>
    <property type="project" value="UniProtKB"/>
</dbReference>
<dbReference type="GO" id="GO:0005759">
    <property type="term" value="C:mitochondrial matrix"/>
    <property type="evidence" value="ECO:0000266"/>
    <property type="project" value="RGD"/>
</dbReference>
<dbReference type="GO" id="GO:0042645">
    <property type="term" value="C:mitochondrial nucleoid"/>
    <property type="evidence" value="ECO:0000250"/>
    <property type="project" value="UniProtKB"/>
</dbReference>
<dbReference type="GO" id="GO:0005739">
    <property type="term" value="C:mitochondrion"/>
    <property type="evidence" value="ECO:0000250"/>
    <property type="project" value="UniProtKB"/>
</dbReference>
<dbReference type="GO" id="GO:0005634">
    <property type="term" value="C:nucleus"/>
    <property type="evidence" value="ECO:0000318"/>
    <property type="project" value="GO_Central"/>
</dbReference>
<dbReference type="GO" id="GO:0035770">
    <property type="term" value="C:ribonucleoprotein granule"/>
    <property type="evidence" value="ECO:0000250"/>
    <property type="project" value="UniProtKB"/>
</dbReference>
<dbReference type="GO" id="GO:0005524">
    <property type="term" value="F:ATP binding"/>
    <property type="evidence" value="ECO:0007669"/>
    <property type="project" value="UniProtKB-KW"/>
</dbReference>
<dbReference type="GO" id="GO:0016887">
    <property type="term" value="F:ATP hydrolysis activity"/>
    <property type="evidence" value="ECO:0007669"/>
    <property type="project" value="RHEA"/>
</dbReference>
<dbReference type="GO" id="GO:0003682">
    <property type="term" value="F:chromatin binding"/>
    <property type="evidence" value="ECO:0000250"/>
    <property type="project" value="UniProtKB"/>
</dbReference>
<dbReference type="GO" id="GO:0003678">
    <property type="term" value="F:DNA helicase activity"/>
    <property type="evidence" value="ECO:0000318"/>
    <property type="project" value="GO_Central"/>
</dbReference>
<dbReference type="GO" id="GO:0003725">
    <property type="term" value="F:double-stranded RNA binding"/>
    <property type="evidence" value="ECO:0000266"/>
    <property type="project" value="RGD"/>
</dbReference>
<dbReference type="GO" id="GO:0002151">
    <property type="term" value="F:G-quadruplex RNA binding"/>
    <property type="evidence" value="ECO:0000318"/>
    <property type="project" value="GO_Central"/>
</dbReference>
<dbReference type="GO" id="GO:0003723">
    <property type="term" value="F:RNA binding"/>
    <property type="evidence" value="ECO:0000250"/>
    <property type="project" value="UniProtKB"/>
</dbReference>
<dbReference type="GO" id="GO:0003724">
    <property type="term" value="F:RNA helicase activity"/>
    <property type="evidence" value="ECO:0000250"/>
    <property type="project" value="UniProtKB"/>
</dbReference>
<dbReference type="GO" id="GO:0007417">
    <property type="term" value="P:central nervous system development"/>
    <property type="evidence" value="ECO:0000250"/>
    <property type="project" value="UniProtKB"/>
</dbReference>
<dbReference type="GO" id="GO:1902775">
    <property type="term" value="P:mitochondrial large ribosomal subunit assembly"/>
    <property type="evidence" value="ECO:0000250"/>
    <property type="project" value="UniProtKB"/>
</dbReference>
<dbReference type="CDD" id="cd17976">
    <property type="entry name" value="DEXHc_DHX30"/>
    <property type="match status" value="1"/>
</dbReference>
<dbReference type="CDD" id="cd18791">
    <property type="entry name" value="SF2_C_RHA"/>
    <property type="match status" value="1"/>
</dbReference>
<dbReference type="FunFam" id="1.20.120.1080:FF:000004">
    <property type="entry name" value="ATP-dependent RNA helicase DHX30 isoform X1"/>
    <property type="match status" value="1"/>
</dbReference>
<dbReference type="FunFam" id="3.30.160.20:FF:000016">
    <property type="entry name" value="ATP-dependent RNA helicase DHX30 isoform X1"/>
    <property type="match status" value="1"/>
</dbReference>
<dbReference type="FunFam" id="3.30.160.20:FF:000017">
    <property type="entry name" value="ATP-dependent RNA helicase DHX30 isoform X1"/>
    <property type="match status" value="1"/>
</dbReference>
<dbReference type="FunFam" id="3.40.50.300:FF:001703">
    <property type="entry name" value="DExH-box helicase 30"/>
    <property type="match status" value="1"/>
</dbReference>
<dbReference type="FunFam" id="3.40.50.300:FF:000375">
    <property type="entry name" value="Putative ATP-dependent RNA helicase DHX30"/>
    <property type="match status" value="1"/>
</dbReference>
<dbReference type="Gene3D" id="1.20.120.1080">
    <property type="match status" value="1"/>
</dbReference>
<dbReference type="Gene3D" id="3.30.160.20">
    <property type="match status" value="2"/>
</dbReference>
<dbReference type="Gene3D" id="3.40.50.300">
    <property type="entry name" value="P-loop containing nucleotide triphosphate hydrolases"/>
    <property type="match status" value="2"/>
</dbReference>
<dbReference type="InterPro" id="IPR011709">
    <property type="entry name" value="DEAD-box_helicase_OB_fold"/>
</dbReference>
<dbReference type="InterPro" id="IPR011545">
    <property type="entry name" value="DEAD/DEAH_box_helicase_dom"/>
</dbReference>
<dbReference type="InterPro" id="IPR002464">
    <property type="entry name" value="DNA/RNA_helicase_DEAH_CS"/>
</dbReference>
<dbReference type="InterPro" id="IPR056755">
    <property type="entry name" value="DSRM_2"/>
</dbReference>
<dbReference type="InterPro" id="IPR007502">
    <property type="entry name" value="Helicase-assoc_dom"/>
</dbReference>
<dbReference type="InterPro" id="IPR014001">
    <property type="entry name" value="Helicase_ATP-bd"/>
</dbReference>
<dbReference type="InterPro" id="IPR001650">
    <property type="entry name" value="Helicase_C-like"/>
</dbReference>
<dbReference type="InterPro" id="IPR027417">
    <property type="entry name" value="P-loop_NTPase"/>
</dbReference>
<dbReference type="PANTHER" id="PTHR18934">
    <property type="entry name" value="ATP-DEPENDENT RNA HELICASE"/>
    <property type="match status" value="1"/>
</dbReference>
<dbReference type="PANTHER" id="PTHR18934:SF257">
    <property type="entry name" value="ATP-DEPENDENT RNA HELICASE DHX30"/>
    <property type="match status" value="1"/>
</dbReference>
<dbReference type="Pfam" id="PF00270">
    <property type="entry name" value="DEAD"/>
    <property type="match status" value="1"/>
</dbReference>
<dbReference type="Pfam" id="PF24995">
    <property type="entry name" value="DSRM_2"/>
    <property type="match status" value="1"/>
</dbReference>
<dbReference type="Pfam" id="PF21010">
    <property type="entry name" value="HA2_C"/>
    <property type="match status" value="1"/>
</dbReference>
<dbReference type="Pfam" id="PF00271">
    <property type="entry name" value="Helicase_C"/>
    <property type="match status" value="1"/>
</dbReference>
<dbReference type="Pfam" id="PF07717">
    <property type="entry name" value="OB_NTP_bind"/>
    <property type="match status" value="1"/>
</dbReference>
<dbReference type="SMART" id="SM00487">
    <property type="entry name" value="DEXDc"/>
    <property type="match status" value="1"/>
</dbReference>
<dbReference type="SMART" id="SM00847">
    <property type="entry name" value="HA2"/>
    <property type="match status" value="1"/>
</dbReference>
<dbReference type="SMART" id="SM00490">
    <property type="entry name" value="HELICc"/>
    <property type="match status" value="1"/>
</dbReference>
<dbReference type="SUPFAM" id="SSF52540">
    <property type="entry name" value="P-loop containing nucleoside triphosphate hydrolases"/>
    <property type="match status" value="1"/>
</dbReference>
<dbReference type="PROSITE" id="PS00690">
    <property type="entry name" value="DEAH_ATP_HELICASE"/>
    <property type="match status" value="1"/>
</dbReference>
<dbReference type="PROSITE" id="PS51192">
    <property type="entry name" value="HELICASE_ATP_BIND_1"/>
    <property type="match status" value="1"/>
</dbReference>
<dbReference type="PROSITE" id="PS51194">
    <property type="entry name" value="HELICASE_CTER"/>
    <property type="match status" value="1"/>
</dbReference>
<sequence>MFTLDSFRKDRTQHRQRQCKLPPPRLPPMCVNPAPGGTISRASRDLLKEFPQPKNLLNSVIGRALGISHAKDKLVYVHTNGPKKKKVTLHIKWPKSVEVEGYGSKKIDAERQAAAAACQLFKGWGLLGPRNELFDAAKYRVLADRFGSPADSWWRPEPTMPPTSWRQLNPENIRPAGTGGLSRSLGREEEEDEEEELEEGTIDVTEFLSMTQQDSHNPLRDSRGGSFEMTDDDSAIRALTQFPLPKNLLAKVIQIATSSSTAKNLMQFHTVGTKTKLATLTLLWPCPMTFVAKGRRKAEAENKAAALACKKLKSLGLVDRNNEPLTHAMYNLASLRELGETQRRPCTIQVPEPILRKIEAFLSHYPVDSSWISPELRLQSDDILPLGKDSGPLSDPITGKPYMPLSEAEEVRLSQSLLELWRRRGPIWQEAPQLPVDPHRDTILSAIEQHPVVVISGDTGCGKTTRIPQLLLERYVTEGRGARCNVIITQPRRISAVSVAQRVSHELGPSLRRNVGFQVRLESKPPARGGALLFCTVGILLRKLQSNPSLEGVSHVIVDEVHERDVNTDFLLILLKGLQRLNPALRLVLMSATGDNERFSRYFGGCPVIKVPGFMYPVKEHYLEDILAKLGKHQYPHRHRHHESEDECALDLDLVTDLVLHIDARGEPGGILCFLPGWQEIKGVQQRLQEALGMHESKYLILPVHSNIPMMDQKAIFQQPPLGVRKIVLATNIAETSITVNDIVHVVDSGLHKEERYDLKTKVSCLETVWVSRANVIQRRGRAGRCQSGFAYHLFPRSRLEKMVPFQVPEILRTPLENLVLQAKIHMPEKTAVEFLSKAVDSPNIKAVDEAVILLQEIGVLDQREYLTTLGQRLAHISTDPRLAKAIVLAAIFRCLHPLLVVVSCLTRDPFSSSLQNRAEVDKVKALLSHDSGSDHLAFVRAVAGWEEVLRWQDRTSRENYLEENLLYAPSLRFIHGLIKQFSENIYEAFLVGKPSDCTLPSAQCNEYSEEEELVKGVLMAGLYPNLIQVRQGKVTRQGKFKPNSVTYRTKSGNILLHKSTINREATRLRSRWLTYFMAVKSNGSVFVRDSSQVHPLAVLLLTDGDVHIRDDGRRATISLSDSDLLRLEGDSRTVRLLRELRRALGRMVERSLRSELAALPLSVQQEHGQLLALLAELLRGPCGSFDVRKTADD</sequence>
<feature type="chain" id="PRO_0000245541" description="ATP-dependent RNA helicase DHX30">
    <location>
        <begin position="1"/>
        <end position="1194"/>
    </location>
</feature>
<feature type="domain" description="DRBM">
    <location>
        <begin position="53"/>
        <end position="121"/>
    </location>
</feature>
<feature type="domain" description="Helicase ATP-binding" evidence="3">
    <location>
        <begin position="444"/>
        <end position="612"/>
    </location>
</feature>
<feature type="domain" description="Helicase C-terminal" evidence="4">
    <location>
        <begin position="654"/>
        <end position="827"/>
    </location>
</feature>
<feature type="region of interest" description="Disordered" evidence="5">
    <location>
        <begin position="1"/>
        <end position="27"/>
    </location>
</feature>
<feature type="region of interest" description="Disordered" evidence="5">
    <location>
        <begin position="153"/>
        <end position="200"/>
    </location>
</feature>
<feature type="short sequence motif" description="DEAH box">
    <location>
        <begin position="559"/>
        <end position="562"/>
    </location>
</feature>
<feature type="compositionally biased region" description="Basic and acidic residues" evidence="5">
    <location>
        <begin position="1"/>
        <end position="10"/>
    </location>
</feature>
<feature type="compositionally biased region" description="Acidic residues" evidence="5">
    <location>
        <begin position="188"/>
        <end position="200"/>
    </location>
</feature>
<feature type="binding site" evidence="3">
    <location>
        <begin position="457"/>
        <end position="464"/>
    </location>
    <ligand>
        <name>ATP</name>
        <dbReference type="ChEBI" id="CHEBI:30616"/>
    </ligand>
</feature>
<feature type="modified residue" description="Phosphoserine" evidence="1">
    <location>
        <position position="6"/>
    </location>
</feature>
<feature type="modified residue" description="Phosphoserine" evidence="8">
    <location>
        <position position="226"/>
    </location>
</feature>
<feature type="modified residue" description="Phosphoserine" evidence="1">
    <location>
        <position position="380"/>
    </location>
</feature>
<reference key="1">
    <citation type="journal article" date="2004" name="Genome Res.">
        <title>The status, quality, and expansion of the NIH full-length cDNA project: the Mammalian Gene Collection (MGC).</title>
        <authorList>
            <consortium name="The MGC Project Team"/>
        </authorList>
    </citation>
    <scope>NUCLEOTIDE SEQUENCE [LARGE SCALE MRNA]</scope>
    <source>
        <tissue>Brain</tissue>
    </source>
</reference>
<reference key="2">
    <citation type="journal article" date="2010" name="Protein Cell">
        <title>DEXH-Box protein DHX30 is required for optimal function of the zinc-finger antiviral protein.</title>
        <authorList>
            <person name="Ye P."/>
            <person name="Liu S."/>
            <person name="Zhu Y."/>
            <person name="Chen G."/>
            <person name="Gao G."/>
        </authorList>
    </citation>
    <scope>FUNCTION</scope>
    <scope>IDENTIFICATION BY MASS SPECTROMETRY</scope>
    <scope>INTERACTION WITH ZC3HAV1</scope>
</reference>
<reference key="3">
    <citation type="journal article" date="2012" name="Nat. Commun.">
        <title>Quantitative maps of protein phosphorylation sites across 14 different rat organs and tissues.</title>
        <authorList>
            <person name="Lundby A."/>
            <person name="Secher A."/>
            <person name="Lage K."/>
            <person name="Nordsborg N.B."/>
            <person name="Dmytriyev A."/>
            <person name="Lundby C."/>
            <person name="Olsen J.V."/>
        </authorList>
    </citation>
    <scope>PHOSPHORYLATION [LARGE SCALE ANALYSIS] AT SER-226</scope>
    <scope>IDENTIFICATION BY MASS SPECTROMETRY [LARGE SCALE ANALYSIS]</scope>
</reference>
<protein>
    <recommendedName>
        <fullName evidence="7">ATP-dependent RNA helicase DHX30</fullName>
        <ecNumber evidence="1">3.6.4.13</ecNumber>
    </recommendedName>
    <alternativeName>
        <fullName>DEAH box protein 30</fullName>
    </alternativeName>
</protein>
<gene>
    <name type="primary">Dhx30</name>
</gene>
<accession>Q5BJS0</accession>
<evidence type="ECO:0000250" key="1">
    <source>
        <dbReference type="UniProtKB" id="Q7L2E3"/>
    </source>
</evidence>
<evidence type="ECO:0000250" key="2">
    <source>
        <dbReference type="UniProtKB" id="Q99PU8"/>
    </source>
</evidence>
<evidence type="ECO:0000255" key="3">
    <source>
        <dbReference type="PROSITE-ProRule" id="PRU00541"/>
    </source>
</evidence>
<evidence type="ECO:0000255" key="4">
    <source>
        <dbReference type="PROSITE-ProRule" id="PRU00542"/>
    </source>
</evidence>
<evidence type="ECO:0000256" key="5">
    <source>
        <dbReference type="SAM" id="MobiDB-lite"/>
    </source>
</evidence>
<evidence type="ECO:0000269" key="6">
    <source>
    </source>
</evidence>
<evidence type="ECO:0000305" key="7"/>
<evidence type="ECO:0007744" key="8">
    <source>
    </source>
</evidence>
<name>DHX30_RAT</name>
<keyword id="KW-0067">ATP-binding</keyword>
<keyword id="KW-0963">Cytoplasm</keyword>
<keyword id="KW-0347">Helicase</keyword>
<keyword id="KW-0378">Hydrolase</keyword>
<keyword id="KW-0496">Mitochondrion</keyword>
<keyword id="KW-1135">Mitochondrion nucleoid</keyword>
<keyword id="KW-0547">Nucleotide-binding</keyword>
<keyword id="KW-0597">Phosphoprotein</keyword>
<keyword id="KW-1185">Reference proteome</keyword>
<keyword id="KW-0690">Ribosome biogenesis</keyword>
<keyword id="KW-0694">RNA-binding</keyword>
<organism>
    <name type="scientific">Rattus norvegicus</name>
    <name type="common">Rat</name>
    <dbReference type="NCBI Taxonomy" id="10116"/>
    <lineage>
        <taxon>Eukaryota</taxon>
        <taxon>Metazoa</taxon>
        <taxon>Chordata</taxon>
        <taxon>Craniata</taxon>
        <taxon>Vertebrata</taxon>
        <taxon>Euteleostomi</taxon>
        <taxon>Mammalia</taxon>
        <taxon>Eutheria</taxon>
        <taxon>Euarchontoglires</taxon>
        <taxon>Glires</taxon>
        <taxon>Rodentia</taxon>
        <taxon>Myomorpha</taxon>
        <taxon>Muroidea</taxon>
        <taxon>Muridae</taxon>
        <taxon>Murinae</taxon>
        <taxon>Rattus</taxon>
    </lineage>
</organism>
<comment type="function">
    <text evidence="1 2 6">RNA-dependent helicase (By similarity). Plays an important role in the assembly of the mitochondrial large ribosomal subunit (By similarity). Associates with mitochondrial DNA (By similarity). Required for optimal function of the zinc-finger antiviral protein ZC3HAV1 (PubMed:21204022). Involved in nervous system development and differentiation through its involvement in the up-regulation of a number of genes which are required for neurogenesis, including GSC, NCAM1, neurogenin, and NEUROD (By similarity).</text>
</comment>
<comment type="catalytic activity">
    <reaction evidence="1">
        <text>ATP + H2O = ADP + phosphate + H(+)</text>
        <dbReference type="Rhea" id="RHEA:13065"/>
        <dbReference type="ChEBI" id="CHEBI:15377"/>
        <dbReference type="ChEBI" id="CHEBI:15378"/>
        <dbReference type="ChEBI" id="CHEBI:30616"/>
        <dbReference type="ChEBI" id="CHEBI:43474"/>
        <dbReference type="ChEBI" id="CHEBI:456216"/>
        <dbReference type="EC" id="3.6.4.13"/>
    </reaction>
</comment>
<comment type="subunit">
    <text evidence="1 6">Identified in a complex with TFAM and SSBP1 (By similarity). Interacts (via N-terminus) with ZC3HAV1 (via N-terminal domain) in an RNA-independent manner. Found in a complex with GRSF1, DDX28, FASTKD2 and FASTKD5 (By similarity).</text>
</comment>
<comment type="subcellular location">
    <subcellularLocation>
        <location evidence="1">Cytoplasm</location>
    </subcellularLocation>
    <subcellularLocation>
        <location evidence="1">Mitochondrion</location>
    </subcellularLocation>
    <subcellularLocation>
        <location evidence="1">Mitochondrion matrix</location>
        <location evidence="1">Mitochondrion nucleoid</location>
    </subcellularLocation>
    <text evidence="1">Localizes to mitochondrial RNA granules found in close proximity to the mitochondrial nucleoids. Relocalizes to stress granules upon heat stress.</text>
</comment>
<comment type="similarity">
    <text evidence="7">Belongs to the DEAD box helicase family. DEAH subfamily.</text>
</comment>